<reference key="1">
    <citation type="journal article" date="2005" name="Science">
        <title>Life at depth: Photobacterium profundum genome sequence and expression analysis.</title>
        <authorList>
            <person name="Vezzi A."/>
            <person name="Campanaro S."/>
            <person name="D'Angelo M."/>
            <person name="Simonato F."/>
            <person name="Vitulo N."/>
            <person name="Lauro F.M."/>
            <person name="Cestaro A."/>
            <person name="Malacrida G."/>
            <person name="Simionati B."/>
            <person name="Cannata N."/>
            <person name="Romualdi C."/>
            <person name="Bartlett D.H."/>
            <person name="Valle G."/>
        </authorList>
    </citation>
    <scope>NUCLEOTIDE SEQUENCE [LARGE SCALE GENOMIC DNA]</scope>
    <source>
        <strain>ATCC BAA-1253 / SS9</strain>
    </source>
</reference>
<name>Y1738_PHOPR</name>
<evidence type="ECO:0000255" key="1">
    <source>
        <dbReference type="HAMAP-Rule" id="MF_00489"/>
    </source>
</evidence>
<organism>
    <name type="scientific">Photobacterium profundum (strain SS9)</name>
    <dbReference type="NCBI Taxonomy" id="298386"/>
    <lineage>
        <taxon>Bacteria</taxon>
        <taxon>Pseudomonadati</taxon>
        <taxon>Pseudomonadota</taxon>
        <taxon>Gammaproteobacteria</taxon>
        <taxon>Vibrionales</taxon>
        <taxon>Vibrionaceae</taxon>
        <taxon>Photobacterium</taxon>
    </lineage>
</organism>
<keyword id="KW-1185">Reference proteome</keyword>
<dbReference type="EMBL" id="CR378668">
    <property type="protein sequence ID" value="CAG20145.1"/>
    <property type="molecule type" value="Genomic_DNA"/>
</dbReference>
<dbReference type="RefSeq" id="WP_011218454.1">
    <property type="nucleotide sequence ID" value="NC_006370.1"/>
</dbReference>
<dbReference type="SMR" id="Q6LRD1"/>
<dbReference type="STRING" id="298386.PBPRA1738"/>
<dbReference type="KEGG" id="ppr:PBPRA1738"/>
<dbReference type="eggNOG" id="COG1671">
    <property type="taxonomic scope" value="Bacteria"/>
</dbReference>
<dbReference type="HOGENOM" id="CLU_106619_2_1_6"/>
<dbReference type="Proteomes" id="UP000000593">
    <property type="component" value="Chromosome 1"/>
</dbReference>
<dbReference type="CDD" id="cd18720">
    <property type="entry name" value="PIN_YqxD-like"/>
    <property type="match status" value="1"/>
</dbReference>
<dbReference type="HAMAP" id="MF_00489">
    <property type="entry name" value="UPF0178"/>
    <property type="match status" value="1"/>
</dbReference>
<dbReference type="InterPro" id="IPR003791">
    <property type="entry name" value="UPF0178"/>
</dbReference>
<dbReference type="NCBIfam" id="NF001095">
    <property type="entry name" value="PRK00124.1"/>
    <property type="match status" value="1"/>
</dbReference>
<dbReference type="PANTHER" id="PTHR35146">
    <property type="entry name" value="UPF0178 PROTEIN YAII"/>
    <property type="match status" value="1"/>
</dbReference>
<dbReference type="PANTHER" id="PTHR35146:SF1">
    <property type="entry name" value="UPF0178 PROTEIN YAII"/>
    <property type="match status" value="1"/>
</dbReference>
<dbReference type="Pfam" id="PF02639">
    <property type="entry name" value="DUF188"/>
    <property type="match status" value="1"/>
</dbReference>
<sequence length="150" mass="16720">MQIWVDADACPNVIKEILFRVANRVGIMVTLVANHHIRVPPSPHIRSTQVLAGFDVADDHIVQQAEPGDLVITADIPLADELITNGVHALNPRGELYTKDTIKQRLQMRDFMETMRSSGVQTGGPPPLNQGDRQNFANKLDTFLVKNFKK</sequence>
<proteinExistence type="inferred from homology"/>
<gene>
    <name type="ordered locus">PBPRA1738</name>
</gene>
<accession>Q6LRD1</accession>
<protein>
    <recommendedName>
        <fullName evidence="1">UPF0178 protein PBPRA1738</fullName>
    </recommendedName>
</protein>
<feature type="chain" id="PRO_0000175992" description="UPF0178 protein PBPRA1738">
    <location>
        <begin position="1"/>
        <end position="150"/>
    </location>
</feature>
<comment type="similarity">
    <text evidence="1">Belongs to the UPF0178 family.</text>
</comment>